<comment type="function">
    <text evidence="2">Catalyzes the conversion of 3'-phosphate to a 2',3'-cyclic phosphodiester at the end of RNA. The mechanism of action of the enzyme occurs in 3 steps: (A) adenylation of the enzyme by ATP; (B) transfer of adenylate to an RNA-N3'P to produce RNA-N3'PP5'A; (C) and attack of the adjacent 2'-hydroxyl on the 3'-phosphorus in the diester linkage to produce the cyclic end product. Likely functions in some aspects of cellular RNA processing.</text>
</comment>
<comment type="catalytic activity">
    <reaction evidence="1 2">
        <text>a 3'-end 3'-phospho-ribonucleotide-RNA + ATP = a 3'-end 2',3'-cyclophospho-ribonucleotide-RNA + AMP + diphosphate</text>
        <dbReference type="Rhea" id="RHEA:23976"/>
        <dbReference type="Rhea" id="RHEA-COMP:10463"/>
        <dbReference type="Rhea" id="RHEA-COMP:10464"/>
        <dbReference type="ChEBI" id="CHEBI:30616"/>
        <dbReference type="ChEBI" id="CHEBI:33019"/>
        <dbReference type="ChEBI" id="CHEBI:83062"/>
        <dbReference type="ChEBI" id="CHEBI:83064"/>
        <dbReference type="ChEBI" id="CHEBI:456215"/>
        <dbReference type="EC" id="6.5.1.4"/>
    </reaction>
</comment>
<comment type="biophysicochemical properties">
    <kinetics>
        <KM evidence="2">20 uM for ATP</KM>
        <KM evidence="2">100 uM for GTP</KM>
    </kinetics>
    <phDependence>
        <text evidence="2">Optimum pH is 8.0-8.5.</text>
    </phDependence>
</comment>
<comment type="subcellular location">
    <subcellularLocation>
        <location>Cytoplasm</location>
    </subcellularLocation>
</comment>
<comment type="disruption phenotype">
    <text evidence="2">Disruption of the rtcA gene does not affect growth.</text>
</comment>
<comment type="miscellaneous">
    <text evidence="4 5">RtcA (apo form) crystallized as a disulfide-linked homodimer via Cys-307 (PubMed:10673421) but the covalent RtcA-AMP catalytic intermediate crystallized as a monomer with the shortest distance between Cys-307 side chains of neighboring protomers being 41 Angstroms (PubMed:20399182).</text>
</comment>
<comment type="similarity">
    <text evidence="3">Belongs to the RNA 3'-terminal cyclase family. Type 1 subfamily.</text>
</comment>
<comment type="sequence caution" evidence="3">
    <conflict type="frameshift">
        <sequence resource="EMBL-CDS" id="AAA58217"/>
    </conflict>
    <text>Produces two separate ORFs.</text>
</comment>
<comment type="sequence caution" evidence="3">
    <conflict type="frameshift">
        <sequence resource="EMBL-CDS" id="AAA58218"/>
    </conflict>
    <text>Produces two separate ORFs.</text>
</comment>
<name>RTCA_ECOLI</name>
<organism>
    <name type="scientific">Escherichia coli (strain K12)</name>
    <dbReference type="NCBI Taxonomy" id="83333"/>
    <lineage>
        <taxon>Bacteria</taxon>
        <taxon>Pseudomonadati</taxon>
        <taxon>Pseudomonadota</taxon>
        <taxon>Gammaproteobacteria</taxon>
        <taxon>Enterobacterales</taxon>
        <taxon>Enterobacteriaceae</taxon>
        <taxon>Escherichia</taxon>
    </lineage>
</organism>
<evidence type="ECO:0000269" key="1">
    <source>
    </source>
</evidence>
<evidence type="ECO:0000269" key="2">
    <source>
    </source>
</evidence>
<evidence type="ECO:0000305" key="3"/>
<evidence type="ECO:0000305" key="4">
    <source>
    </source>
</evidence>
<evidence type="ECO:0000305" key="5">
    <source>
    </source>
</evidence>
<evidence type="ECO:0007744" key="6">
    <source>
        <dbReference type="PDB" id="1QMH"/>
    </source>
</evidence>
<evidence type="ECO:0007744" key="7">
    <source>
        <dbReference type="PDB" id="3KGD"/>
    </source>
</evidence>
<evidence type="ECO:0007829" key="8">
    <source>
        <dbReference type="PDB" id="1QMI"/>
    </source>
</evidence>
<evidence type="ECO:0007829" key="9">
    <source>
        <dbReference type="PDB" id="3KGD"/>
    </source>
</evidence>
<evidence type="ECO:0007829" key="10">
    <source>
        <dbReference type="PDB" id="3TUT"/>
    </source>
</evidence>
<evidence type="ECO:0007829" key="11">
    <source>
        <dbReference type="PDB" id="3TW3"/>
    </source>
</evidence>
<gene>
    <name type="primary">rtcA</name>
    <name type="synonym">yhgJ</name>
    <name type="synonym">yhgK</name>
    <name type="ordered locus">b4475</name>
    <name type="ordered locus">JW5688</name>
</gene>
<accession>P46849</accession>
<accession>P46848</accession>
<accession>Q2M784</accession>
<accession>Q47349</accession>
<dbReference type="EC" id="6.5.1.4"/>
<dbReference type="EMBL" id="U18997">
    <property type="protein sequence ID" value="AAA58218.1"/>
    <property type="status" value="ALT_FRAME"/>
    <property type="molecule type" value="Genomic_DNA"/>
</dbReference>
<dbReference type="EMBL" id="U18997">
    <property type="protein sequence ID" value="AAA58217.1"/>
    <property type="status" value="ALT_FRAME"/>
    <property type="molecule type" value="Genomic_DNA"/>
</dbReference>
<dbReference type="EMBL" id="U00096">
    <property type="protein sequence ID" value="AAT48181.1"/>
    <property type="molecule type" value="Genomic_DNA"/>
</dbReference>
<dbReference type="EMBL" id="AP009048">
    <property type="protein sequence ID" value="BAE77872.1"/>
    <property type="molecule type" value="Genomic_DNA"/>
</dbReference>
<dbReference type="EMBL" id="M13585">
    <property type="protein sequence ID" value="AAA83889.1"/>
    <property type="molecule type" value="Genomic_DNA"/>
</dbReference>
<dbReference type="RefSeq" id="WP_001335950.1">
    <property type="nucleotide sequence ID" value="NZ_SSZK01000008.1"/>
</dbReference>
<dbReference type="RefSeq" id="YP_026219.1">
    <property type="nucleotide sequence ID" value="NC_000913.3"/>
</dbReference>
<dbReference type="PDB" id="1QMH">
    <property type="method" value="X-ray"/>
    <property type="resolution" value="2.10 A"/>
    <property type="chains" value="A/B=2-338"/>
</dbReference>
<dbReference type="PDB" id="1QMI">
    <property type="method" value="X-ray"/>
    <property type="resolution" value="2.80 A"/>
    <property type="chains" value="A/B/C/D=2-338"/>
</dbReference>
<dbReference type="PDB" id="3KGD">
    <property type="method" value="X-ray"/>
    <property type="resolution" value="1.68 A"/>
    <property type="chains" value="A/B/C/D=1-338"/>
</dbReference>
<dbReference type="PDB" id="3TUT">
    <property type="method" value="X-ray"/>
    <property type="resolution" value="1.58 A"/>
    <property type="chains" value="A=1-338"/>
</dbReference>
<dbReference type="PDB" id="3TUX">
    <property type="method" value="X-ray"/>
    <property type="resolution" value="1.85 A"/>
    <property type="chains" value="A=1-338"/>
</dbReference>
<dbReference type="PDB" id="3TV1">
    <property type="method" value="X-ray"/>
    <property type="resolution" value="1.90 A"/>
    <property type="chains" value="A/B=1-338"/>
</dbReference>
<dbReference type="PDB" id="3TW3">
    <property type="method" value="X-ray"/>
    <property type="resolution" value="2.10 A"/>
    <property type="chains" value="A=1-338"/>
</dbReference>
<dbReference type="PDBsum" id="1QMH"/>
<dbReference type="PDBsum" id="1QMI"/>
<dbReference type="PDBsum" id="3KGD"/>
<dbReference type="PDBsum" id="3TUT"/>
<dbReference type="PDBsum" id="3TUX"/>
<dbReference type="PDBsum" id="3TV1"/>
<dbReference type="PDBsum" id="3TW3"/>
<dbReference type="SMR" id="P46849"/>
<dbReference type="BioGRID" id="4261186">
    <property type="interactions" value="4"/>
</dbReference>
<dbReference type="FunCoup" id="P46849">
    <property type="interactions" value="519"/>
</dbReference>
<dbReference type="STRING" id="511145.b4475"/>
<dbReference type="DrugBank" id="DB04272">
    <property type="generic name" value="Citric acid"/>
</dbReference>
<dbReference type="PaxDb" id="511145-b4475"/>
<dbReference type="EnsemblBacteria" id="AAT48181">
    <property type="protein sequence ID" value="AAT48181"/>
    <property type="gene ID" value="b4475"/>
</dbReference>
<dbReference type="GeneID" id="2847707"/>
<dbReference type="KEGG" id="ecj:JW5688"/>
<dbReference type="KEGG" id="eco:b4475"/>
<dbReference type="KEGG" id="ecoc:C3026_18545"/>
<dbReference type="PATRIC" id="fig|1411691.4.peg.3309"/>
<dbReference type="EchoBASE" id="EB2773"/>
<dbReference type="eggNOG" id="COG0430">
    <property type="taxonomic scope" value="Bacteria"/>
</dbReference>
<dbReference type="HOGENOM" id="CLU_027882_0_0_6"/>
<dbReference type="InParanoid" id="P46849"/>
<dbReference type="OMA" id="WSPPIDY"/>
<dbReference type="OrthoDB" id="9789235at2"/>
<dbReference type="PhylomeDB" id="P46849"/>
<dbReference type="BioCyc" id="EcoCyc:G7750-MONOMER"/>
<dbReference type="BioCyc" id="MetaCyc:G7750-MONOMER"/>
<dbReference type="BRENDA" id="6.5.1.4">
    <property type="organism ID" value="2026"/>
</dbReference>
<dbReference type="EvolutionaryTrace" id="P46849"/>
<dbReference type="PRO" id="PR:P46849"/>
<dbReference type="Proteomes" id="UP000000625">
    <property type="component" value="Chromosome"/>
</dbReference>
<dbReference type="GO" id="GO:0005737">
    <property type="term" value="C:cytoplasm"/>
    <property type="evidence" value="ECO:0007669"/>
    <property type="project" value="UniProtKB-SubCell"/>
</dbReference>
<dbReference type="GO" id="GO:0005524">
    <property type="term" value="F:ATP binding"/>
    <property type="evidence" value="ECO:0007669"/>
    <property type="project" value="UniProtKB-KW"/>
</dbReference>
<dbReference type="GO" id="GO:0003963">
    <property type="term" value="F:RNA-3'-phosphate cyclase activity"/>
    <property type="evidence" value="ECO:0000314"/>
    <property type="project" value="EcoCyc"/>
</dbReference>
<dbReference type="GO" id="GO:0006396">
    <property type="term" value="P:RNA processing"/>
    <property type="evidence" value="ECO:0007669"/>
    <property type="project" value="InterPro"/>
</dbReference>
<dbReference type="CDD" id="cd00295">
    <property type="entry name" value="RNA_Cyclase"/>
    <property type="match status" value="1"/>
</dbReference>
<dbReference type="FunFam" id="3.65.10.20:FF:000002">
    <property type="entry name" value="GM19193"/>
    <property type="match status" value="1"/>
</dbReference>
<dbReference type="FunFam" id="3.30.360.20:FF:000003">
    <property type="entry name" value="RNA 3'-terminal phosphate cyclase"/>
    <property type="match status" value="1"/>
</dbReference>
<dbReference type="Gene3D" id="3.65.10.20">
    <property type="entry name" value="RNA 3'-terminal phosphate cyclase domain"/>
    <property type="match status" value="1"/>
</dbReference>
<dbReference type="Gene3D" id="3.30.360.20">
    <property type="entry name" value="RNA 3'-terminal phosphate cyclase, insert domain"/>
    <property type="match status" value="1"/>
</dbReference>
<dbReference type="HAMAP" id="MF_00200">
    <property type="entry name" value="RTC"/>
    <property type="match status" value="1"/>
</dbReference>
<dbReference type="InterPro" id="IPR013791">
    <property type="entry name" value="RNA3'-term_phos_cycl_insert"/>
</dbReference>
<dbReference type="InterPro" id="IPR023797">
    <property type="entry name" value="RNA3'_phos_cyclase_dom"/>
</dbReference>
<dbReference type="InterPro" id="IPR037136">
    <property type="entry name" value="RNA3'_phos_cyclase_dom_sf"/>
</dbReference>
<dbReference type="InterPro" id="IPR000228">
    <property type="entry name" value="RNA3'_term_phos_cyc"/>
</dbReference>
<dbReference type="InterPro" id="IPR017770">
    <property type="entry name" value="RNA3'_term_phos_cyc_type_1"/>
</dbReference>
<dbReference type="InterPro" id="IPR020719">
    <property type="entry name" value="RNA3'_term_phos_cycl-like_CS"/>
</dbReference>
<dbReference type="InterPro" id="IPR013792">
    <property type="entry name" value="RNA3'P_cycl/enolpyr_Trfase_a/b"/>
</dbReference>
<dbReference type="InterPro" id="IPR036553">
    <property type="entry name" value="RPTC_insert"/>
</dbReference>
<dbReference type="NCBIfam" id="NF003246">
    <property type="entry name" value="PRK04204.1-2"/>
    <property type="match status" value="1"/>
</dbReference>
<dbReference type="NCBIfam" id="NF003247">
    <property type="entry name" value="PRK04204.1-3"/>
    <property type="match status" value="1"/>
</dbReference>
<dbReference type="NCBIfam" id="TIGR03399">
    <property type="entry name" value="RNA_3prim_cycl"/>
    <property type="match status" value="1"/>
</dbReference>
<dbReference type="PANTHER" id="PTHR11096">
    <property type="entry name" value="RNA 3' TERMINAL PHOSPHATE CYCLASE"/>
    <property type="match status" value="1"/>
</dbReference>
<dbReference type="PANTHER" id="PTHR11096:SF0">
    <property type="entry name" value="RNA 3'-TERMINAL PHOSPHATE CYCLASE"/>
    <property type="match status" value="1"/>
</dbReference>
<dbReference type="Pfam" id="PF01137">
    <property type="entry name" value="RTC"/>
    <property type="match status" value="1"/>
</dbReference>
<dbReference type="Pfam" id="PF05189">
    <property type="entry name" value="RTC_insert"/>
    <property type="match status" value="1"/>
</dbReference>
<dbReference type="PIRSF" id="PIRSF005378">
    <property type="entry name" value="RNA3'_term_phos_cycl_euk"/>
    <property type="match status" value="1"/>
</dbReference>
<dbReference type="SUPFAM" id="SSF55205">
    <property type="entry name" value="EPT/RTPC-like"/>
    <property type="match status" value="2"/>
</dbReference>
<dbReference type="SUPFAM" id="SSF52913">
    <property type="entry name" value="RNA 3'-terminal phosphate cyclase, RPTC, insert domain"/>
    <property type="match status" value="1"/>
</dbReference>
<dbReference type="PROSITE" id="PS01287">
    <property type="entry name" value="RTC"/>
    <property type="match status" value="1"/>
</dbReference>
<reference key="1">
    <citation type="journal article" date="1997" name="Science">
        <title>The complete genome sequence of Escherichia coli K-12.</title>
        <authorList>
            <person name="Blattner F.R."/>
            <person name="Plunkett G. III"/>
            <person name="Bloch C.A."/>
            <person name="Perna N.T."/>
            <person name="Burland V."/>
            <person name="Riley M."/>
            <person name="Collado-Vides J."/>
            <person name="Glasner J.D."/>
            <person name="Rode C.K."/>
            <person name="Mayhew G.F."/>
            <person name="Gregor J."/>
            <person name="Davis N.W."/>
            <person name="Kirkpatrick H.A."/>
            <person name="Goeden M.A."/>
            <person name="Rose D.J."/>
            <person name="Mau B."/>
            <person name="Shao Y."/>
        </authorList>
    </citation>
    <scope>NUCLEOTIDE SEQUENCE [LARGE SCALE GENOMIC DNA]</scope>
    <source>
        <strain>K12 / MG1655 / ATCC 47076</strain>
    </source>
</reference>
<reference key="2">
    <citation type="journal article" date="2006" name="Nucleic Acids Res.">
        <title>Escherichia coli K-12: a cooperatively developed annotation snapshot -- 2005.</title>
        <authorList>
            <person name="Riley M."/>
            <person name="Abe T."/>
            <person name="Arnaud M.B."/>
            <person name="Berlyn M.K.B."/>
            <person name="Blattner F.R."/>
            <person name="Chaudhuri R.R."/>
            <person name="Glasner J.D."/>
            <person name="Horiuchi T."/>
            <person name="Keseler I.M."/>
            <person name="Kosuge T."/>
            <person name="Mori H."/>
            <person name="Perna N.T."/>
            <person name="Plunkett G. III"/>
            <person name="Rudd K.E."/>
            <person name="Serres M.H."/>
            <person name="Thomas G.H."/>
            <person name="Thomson N.R."/>
            <person name="Wishart D."/>
            <person name="Wanner B.L."/>
        </authorList>
    </citation>
    <scope>SEQUENCE REVISION</scope>
</reference>
<reference key="3">
    <citation type="journal article" date="2006" name="Mol. Syst. Biol.">
        <title>Highly accurate genome sequences of Escherichia coli K-12 strains MG1655 and W3110.</title>
        <authorList>
            <person name="Hayashi K."/>
            <person name="Morooka N."/>
            <person name="Yamamoto Y."/>
            <person name="Fujita K."/>
            <person name="Isono K."/>
            <person name="Choi S."/>
            <person name="Ohtsubo E."/>
            <person name="Baba T."/>
            <person name="Wanner B.L."/>
            <person name="Mori H."/>
            <person name="Horiuchi T."/>
        </authorList>
    </citation>
    <scope>NUCLEOTIDE SEQUENCE [LARGE SCALE GENOMIC DNA]</scope>
    <source>
        <strain>K12 / W3110 / ATCC 27325 / DSM 5911</strain>
    </source>
</reference>
<reference key="4">
    <citation type="journal article" date="1986" name="Gene">
        <title>The nucleotide sequence of the malT gene encoding the positive regulator of the Escherichia coli maltose regulon.</title>
        <authorList>
            <person name="Cole S.T."/>
            <person name="Raibaud O."/>
        </authorList>
    </citation>
    <scope>NUCLEOTIDE SEQUENCE [GENOMIC DNA] OF 149-338</scope>
    <source>
        <strain>K12</strain>
    </source>
</reference>
<reference key="5">
    <citation type="journal article" date="1997" name="EMBO J.">
        <title>The human RNA 3'-terminal phosphate cyclase is a member of a new family of proteins conserved in Eucarya, Bacteria and Archaea.</title>
        <authorList>
            <person name="Genschik P."/>
            <person name="Billy E."/>
            <person name="Swianiewicz M."/>
            <person name="Filipowicz W."/>
        </authorList>
    </citation>
    <scope>SEQUENCE REVISION</scope>
    <scope>CHARACTERIZATION</scope>
</reference>
<reference key="6">
    <citation type="journal article" date="1998" name="J. Biol. Chem.">
        <title>Characterization of the Escherichia coli RNA 3'-terminal phosphate cyclase and its sigma54-regulated operon.</title>
        <authorList>
            <person name="Genschik P."/>
            <person name="Drabikowski K."/>
            <person name="Filipowicz W."/>
        </authorList>
    </citation>
    <scope>FUNCTION</scope>
    <scope>CHARACTERIZATION</scope>
    <scope>CATALYTIC ACTIVITY</scope>
    <scope>SUBSTRATE SPECIFICITY</scope>
    <scope>BIOPHYSICOCHEMICAL PROPERTIES</scope>
    <scope>DISRUPTION PHENOTYPE</scope>
</reference>
<reference key="7">
    <citation type="journal article" date="2000" name="Structure">
        <title>Crystal structure of RNA 3'-terminal phosphate cyclase, a ubiquitous enzyme with unusual topology.</title>
        <authorList>
            <person name="Palm G.J."/>
            <person name="Billy E."/>
            <person name="Filipowicz W."/>
            <person name="Wlodawer A."/>
        </authorList>
    </citation>
    <scope>X-RAY CRYSTALLOGRAPHY (2.1 ANGSTROMS)</scope>
    <source>
        <strain>K12</strain>
    </source>
</reference>
<reference key="8">
    <citation type="journal article" date="2010" name="Structure">
        <title>Structure of the RNA 3'-phosphate cyclase-adenylate intermediate illuminates nucleotide specificity and covalent nucleotidyl transfer.</title>
        <authorList>
            <person name="Tanaka N."/>
            <person name="Smith P."/>
            <person name="Shuman S."/>
        </authorList>
    </citation>
    <scope>X-RAY CRYSTALLOGRAPHY (1.68 ANGSTROMS) IN COMPLEX WITH AMP</scope>
    <scope>CATALYTIC ACTIVITY</scope>
    <scope>ACTIVE SITE</scope>
    <scope>REACTION MECHANISM</scope>
    <scope>MUTAGENESIS OF GLN-103; SER-128; PRO-130; PHE-134; PHE-250; GLU-269; TYR-283; ASP-286; GLN-287 AND HIS-308</scope>
</reference>
<feature type="chain" id="PRO_0000156416" description="RNA 3'-terminal phosphate cyclase">
    <location>
        <begin position="1"/>
        <end position="338"/>
    </location>
</feature>
<feature type="active site" description="Tele-AMP-histidine intermediate" evidence="1 6">
    <location>
        <position position="308"/>
    </location>
</feature>
<feature type="binding site" evidence="1 7">
    <location>
        <position position="103"/>
    </location>
    <ligand>
        <name>ATP</name>
        <dbReference type="ChEBI" id="CHEBI:30616"/>
    </ligand>
</feature>
<feature type="binding site" evidence="1 7">
    <location>
        <position position="130"/>
    </location>
    <ligand>
        <name>ATP</name>
        <dbReference type="ChEBI" id="CHEBI:30616"/>
    </ligand>
</feature>
<feature type="binding site" evidence="1 7">
    <location>
        <position position="283"/>
    </location>
    <ligand>
        <name>ATP</name>
        <dbReference type="ChEBI" id="CHEBI:30616"/>
    </ligand>
</feature>
<feature type="binding site" evidence="1 7">
    <location>
        <position position="286"/>
    </location>
    <ligand>
        <name>ATP</name>
        <dbReference type="ChEBI" id="CHEBI:30616"/>
    </ligand>
</feature>
<feature type="binding site" evidence="1 7">
    <location>
        <position position="287"/>
    </location>
    <ligand>
        <name>ATP</name>
        <dbReference type="ChEBI" id="CHEBI:30616"/>
    </ligand>
</feature>
<feature type="binding site" evidence="1 7">
    <location>
        <position position="308"/>
    </location>
    <ligand>
        <name>ATP</name>
        <dbReference type="ChEBI" id="CHEBI:30616"/>
    </ligand>
</feature>
<feature type="mutagenesis site" description="No effect on RNA cyclase activity and RtcA adenylation." evidence="1">
    <original>Q</original>
    <variation>A</variation>
    <location>
        <position position="103"/>
    </location>
</feature>
<feature type="mutagenesis site" description="No effect on RNA cyclase activity and RtcA adenylation." evidence="1">
    <original>S</original>
    <variation>A</variation>
    <location>
        <position position="128"/>
    </location>
</feature>
<feature type="mutagenesis site" description="33% of wild-type RNA cyclase activity and 13% of wild-type RtcA adenylation." evidence="1">
    <original>P</original>
    <variation>G</variation>
    <location>
        <position position="130"/>
    </location>
</feature>
<feature type="mutagenesis site" description="3% of wild-type RNA cyclase activity and 2% of wild-type RtcA adenylation." evidence="1">
    <original>F</original>
    <variation>A</variation>
    <location>
        <position position="134"/>
    </location>
</feature>
<feature type="mutagenesis site" description="28% of wild-type RNA cyclase activity and 38% of wild-type RtcA adenylation." evidence="1">
    <original>F</original>
    <variation>A</variation>
    <location>
        <position position="250"/>
    </location>
</feature>
<feature type="mutagenesis site" description="Nearly no effect on RNA cyclase activity and 2-fold decrease in RtcA adenylation." evidence="1">
    <original>E</original>
    <variation>A</variation>
    <location>
        <position position="269"/>
    </location>
</feature>
<feature type="mutagenesis site" description="12% of wild-type RNA cyclase activity and 2% of wild-type RtcA adenylation." evidence="1">
    <original>Y</original>
    <variation>A</variation>
    <location>
        <position position="283"/>
    </location>
</feature>
<feature type="mutagenesis site" description="Loss of RNA cyclase activity and RtcA adenylation." evidence="1">
    <original>D</original>
    <variation>A</variation>
    <location>
        <position position="286"/>
    </location>
</feature>
<feature type="mutagenesis site" description="Loss of RNA cyclase activity and RtcA adenylation." evidence="1">
    <original>Q</original>
    <variation>A</variation>
    <location>
        <position position="287"/>
    </location>
</feature>
<feature type="mutagenesis site" description="Loss of RNA cyclase activity and RtcA adenylation." evidence="1">
    <original>H</original>
    <variation>A</variation>
    <variation>G</variation>
    <location>
        <position position="308"/>
    </location>
</feature>
<feature type="strand" evidence="10">
    <location>
        <begin position="5"/>
        <end position="8"/>
    </location>
</feature>
<feature type="turn" evidence="9">
    <location>
        <begin position="14"/>
        <end position="16"/>
    </location>
</feature>
<feature type="helix" evidence="10">
    <location>
        <begin position="17"/>
        <end position="29"/>
    </location>
</feature>
<feature type="strand" evidence="10">
    <location>
        <begin position="33"/>
        <end position="37"/>
    </location>
</feature>
<feature type="turn" evidence="10">
    <location>
        <begin position="38"/>
        <end position="41"/>
    </location>
</feature>
<feature type="strand" evidence="10">
    <location>
        <begin position="42"/>
        <end position="44"/>
    </location>
</feature>
<feature type="helix" evidence="10">
    <location>
        <begin position="49"/>
        <end position="62"/>
    </location>
</feature>
<feature type="strand" evidence="10">
    <location>
        <begin position="65"/>
        <end position="67"/>
    </location>
</feature>
<feature type="strand" evidence="10">
    <location>
        <begin position="76"/>
        <end position="79"/>
    </location>
</feature>
<feature type="strand" evidence="10">
    <location>
        <begin position="87"/>
        <end position="91"/>
    </location>
</feature>
<feature type="strand" evidence="10">
    <location>
        <begin position="93"/>
        <end position="95"/>
    </location>
</feature>
<feature type="helix" evidence="10">
    <location>
        <begin position="98"/>
        <end position="109"/>
    </location>
</feature>
<feature type="strand" evidence="10">
    <location>
        <begin position="112"/>
        <end position="114"/>
    </location>
</feature>
<feature type="strand" evidence="10">
    <location>
        <begin position="116"/>
        <end position="124"/>
    </location>
</feature>
<feature type="strand" evidence="8">
    <location>
        <begin position="127"/>
        <end position="129"/>
    </location>
</feature>
<feature type="helix" evidence="10">
    <location>
        <begin position="132"/>
        <end position="137"/>
    </location>
</feature>
<feature type="helix" evidence="10">
    <location>
        <begin position="139"/>
        <end position="145"/>
    </location>
</feature>
<feature type="strand" evidence="10">
    <location>
        <begin position="150"/>
        <end position="156"/>
    </location>
</feature>
<feature type="turn" evidence="10">
    <location>
        <begin position="160"/>
        <end position="162"/>
    </location>
</feature>
<feature type="strand" evidence="10">
    <location>
        <begin position="165"/>
        <end position="171"/>
    </location>
</feature>
<feature type="strand" evidence="10">
    <location>
        <begin position="188"/>
        <end position="200"/>
    </location>
</feature>
<feature type="helix" evidence="10">
    <location>
        <begin position="202"/>
        <end position="212"/>
    </location>
</feature>
<feature type="strand" evidence="10">
    <location>
        <begin position="218"/>
        <end position="226"/>
    </location>
</feature>
<feature type="helix" evidence="10">
    <location>
        <begin position="228"/>
        <end position="230"/>
    </location>
</feature>
<feature type="strand" evidence="10">
    <location>
        <begin position="232"/>
        <end position="244"/>
    </location>
</feature>
<feature type="strand" evidence="10">
    <location>
        <begin position="246"/>
        <end position="252"/>
    </location>
</feature>
<feature type="strand" evidence="11">
    <location>
        <begin position="255"/>
        <end position="257"/>
    </location>
</feature>
<feature type="helix" evidence="10">
    <location>
        <begin position="259"/>
        <end position="274"/>
    </location>
</feature>
<feature type="strand" evidence="10">
    <location>
        <begin position="278"/>
        <end position="280"/>
    </location>
</feature>
<feature type="helix" evidence="10">
    <location>
        <begin position="282"/>
        <end position="295"/>
    </location>
</feature>
<feature type="strand" evidence="10">
    <location>
        <begin position="299"/>
        <end position="304"/>
    </location>
</feature>
<feature type="helix" evidence="10">
    <location>
        <begin position="307"/>
        <end position="319"/>
    </location>
</feature>
<feature type="strand" evidence="10">
    <location>
        <begin position="324"/>
        <end position="329"/>
    </location>
</feature>
<feature type="strand" evidence="10">
    <location>
        <begin position="332"/>
        <end position="337"/>
    </location>
</feature>
<protein>
    <recommendedName>
        <fullName>RNA 3'-terminal phosphate cyclase</fullName>
        <shortName>RNA cyclase</shortName>
        <shortName>RNA-3'-phosphate cyclase</shortName>
        <ecNumber>6.5.1.4</ecNumber>
    </recommendedName>
</protein>
<proteinExistence type="evidence at protein level"/>
<keyword id="KW-0002">3D-structure</keyword>
<keyword id="KW-0067">ATP-binding</keyword>
<keyword id="KW-0963">Cytoplasm</keyword>
<keyword id="KW-0436">Ligase</keyword>
<keyword id="KW-0547">Nucleotide-binding</keyword>
<keyword id="KW-1185">Reference proteome</keyword>
<sequence length="338" mass="35903">MKRMIALDGAQGEGGGQILRSALSLSMITGQPFTITSIRAGRAKPGLLRQHLTAVKAATEICGATVEGAELGSQRLLFRPGTVRGGDYRFAIGSAGSCTLVLQTVLPALWFADGPSRVEVSGGTDNPSAPPADFIRRVLEPLLAKIGIHQQTTLLRHGFYPAGGGVVATEVSPVASFNTLQLGERGNIVQMRGEVLLAGVPRHVAEREIATLAGSFSLHEQNIHNLPRDQGPGNTVSLEVESENITERFFVVGEKRVSAEVVAAQLVKEVKRYLASTAAVGEYLADQLVLPMALAGAGEFTVAHPSCHLLTNIAVVERFLPVRFSLIETDGVTRVSIE</sequence>